<dbReference type="EC" id="2.1.1.230" evidence="1"/>
<dbReference type="EMBL" id="U75434">
    <property type="protein sequence ID" value="AAB17875.1"/>
    <property type="molecule type" value="Genomic_DNA"/>
</dbReference>
<dbReference type="PIR" id="JQ0686">
    <property type="entry name" value="JQ0686"/>
</dbReference>
<dbReference type="RefSeq" id="WP_063854493.1">
    <property type="nucleotide sequence ID" value="NZ_CP029788.1"/>
</dbReference>
<dbReference type="PDB" id="3NK6">
    <property type="method" value="X-ray"/>
    <property type="resolution" value="2.00 A"/>
    <property type="chains" value="A/B=1-274"/>
</dbReference>
<dbReference type="PDB" id="3NK7">
    <property type="method" value="X-ray"/>
    <property type="resolution" value="2.10 A"/>
    <property type="chains" value="A/B=1-274"/>
</dbReference>
<dbReference type="PDBsum" id="3NK6"/>
<dbReference type="PDBsum" id="3NK7"/>
<dbReference type="SMR" id="P52391"/>
<dbReference type="KEGG" id="ag:AAB17875"/>
<dbReference type="OrthoDB" id="9785673at2"/>
<dbReference type="BRENDA" id="2.1.1.230">
    <property type="organism ID" value="12393"/>
</dbReference>
<dbReference type="EvolutionaryTrace" id="P52391"/>
<dbReference type="GO" id="GO:0030743">
    <property type="term" value="F:23S rRNA (adenosine(1067)-2'-O)-methyltransferase activity"/>
    <property type="evidence" value="ECO:0007669"/>
    <property type="project" value="UniProtKB-EC"/>
</dbReference>
<dbReference type="GO" id="GO:0003723">
    <property type="term" value="F:RNA binding"/>
    <property type="evidence" value="ECO:0007669"/>
    <property type="project" value="InterPro"/>
</dbReference>
<dbReference type="GO" id="GO:0046677">
    <property type="term" value="P:response to antibiotic"/>
    <property type="evidence" value="ECO:0007669"/>
    <property type="project" value="UniProtKB-KW"/>
</dbReference>
<dbReference type="CDD" id="cd18108">
    <property type="entry name" value="SpoU-like_NHR"/>
    <property type="match status" value="1"/>
</dbReference>
<dbReference type="Gene3D" id="3.30.1330.30">
    <property type="match status" value="1"/>
</dbReference>
<dbReference type="Gene3D" id="3.40.1280.10">
    <property type="match status" value="1"/>
</dbReference>
<dbReference type="InterPro" id="IPR029028">
    <property type="entry name" value="Alpha/beta_knot_MTases"/>
</dbReference>
<dbReference type="InterPro" id="IPR029064">
    <property type="entry name" value="Ribosomal_eL30-like_sf"/>
</dbReference>
<dbReference type="InterPro" id="IPR051259">
    <property type="entry name" value="rRNA_Methyltransferase"/>
</dbReference>
<dbReference type="InterPro" id="IPR001537">
    <property type="entry name" value="SpoU_MeTrfase"/>
</dbReference>
<dbReference type="InterPro" id="IPR006795">
    <property type="entry name" value="Thiostrepton-R_Mease_TSNR_N"/>
</dbReference>
<dbReference type="InterPro" id="IPR029026">
    <property type="entry name" value="tRNA_m1G_MTases_N"/>
</dbReference>
<dbReference type="NCBIfam" id="NF000035">
    <property type="entry name" value="nosihep_NshR"/>
    <property type="match status" value="1"/>
</dbReference>
<dbReference type="NCBIfam" id="NF000477">
    <property type="entry name" value="NshR_TsnR"/>
    <property type="match status" value="1"/>
</dbReference>
<dbReference type="PANTHER" id="PTHR43191">
    <property type="entry name" value="RRNA METHYLTRANSFERASE 3"/>
    <property type="match status" value="1"/>
</dbReference>
<dbReference type="PANTHER" id="PTHR43191:SF2">
    <property type="entry name" value="RRNA METHYLTRANSFERASE 3, MITOCHONDRIAL"/>
    <property type="match status" value="1"/>
</dbReference>
<dbReference type="Pfam" id="PF00588">
    <property type="entry name" value="SpoU_methylase"/>
    <property type="match status" value="1"/>
</dbReference>
<dbReference type="Pfam" id="PF04705">
    <property type="entry name" value="TSNR_N"/>
    <property type="match status" value="1"/>
</dbReference>
<dbReference type="SUPFAM" id="SSF75217">
    <property type="entry name" value="alpha/beta knot"/>
    <property type="match status" value="1"/>
</dbReference>
<comment type="function">
    <text evidence="1">Specifically methylates the adenosine-1067 in 23S ribosomal RNA. Confers resistance to antibiotic nosiheptide.</text>
</comment>
<comment type="catalytic activity">
    <reaction evidence="1">
        <text>adenosine(1067) in 23S rRNA + S-adenosyl-L-methionine = 2'-O-methyladenosine(1067) in 23S rRNA + S-adenosyl-L-homocysteine + H(+)</text>
        <dbReference type="Rhea" id="RHEA:43212"/>
        <dbReference type="Rhea" id="RHEA-COMP:10409"/>
        <dbReference type="Rhea" id="RHEA-COMP:10410"/>
        <dbReference type="ChEBI" id="CHEBI:15378"/>
        <dbReference type="ChEBI" id="CHEBI:57856"/>
        <dbReference type="ChEBI" id="CHEBI:59789"/>
        <dbReference type="ChEBI" id="CHEBI:74411"/>
        <dbReference type="ChEBI" id="CHEBI:74477"/>
        <dbReference type="EC" id="2.1.1.230"/>
    </reaction>
</comment>
<comment type="subunit">
    <text evidence="1">Homodimer.</text>
</comment>
<comment type="similarity">
    <text evidence="4">Belongs to the class IV-like SAM-binding methyltransferase superfamily. RNA methyltransferase TsnR/AvirB family.</text>
</comment>
<accession>P52391</accession>
<feature type="chain" id="PRO_0000096811" description="23S rRNA (adenosine(1067)-2'-O)-methyltransferase">
    <location>
        <begin position="1"/>
        <end position="274"/>
    </location>
</feature>
<feature type="binding site" evidence="7">
    <location>
        <position position="165"/>
    </location>
    <ligand>
        <name>S-adenosyl-L-methionine</name>
        <dbReference type="ChEBI" id="CHEBI:59789"/>
    </ligand>
</feature>
<feature type="binding site" evidence="7">
    <location>
        <position position="195"/>
    </location>
    <ligand>
        <name>S-adenosyl-L-methionine</name>
        <dbReference type="ChEBI" id="CHEBI:59789"/>
    </ligand>
</feature>
<feature type="binding site" evidence="7">
    <location>
        <begin position="218"/>
        <end position="220"/>
    </location>
    <ligand>
        <name>S-adenosyl-L-methionine</name>
        <dbReference type="ChEBI" id="CHEBI:59789"/>
    </ligand>
</feature>
<feature type="binding site" evidence="7">
    <location>
        <begin position="238"/>
        <end position="240"/>
    </location>
    <ligand>
        <name>S-adenosyl-L-methionine</name>
        <dbReference type="ChEBI" id="CHEBI:59789"/>
    </ligand>
</feature>
<feature type="binding site" evidence="7">
    <location>
        <begin position="247"/>
        <end position="252"/>
    </location>
    <ligand>
        <name>S-adenosyl-L-methionine</name>
        <dbReference type="ChEBI" id="CHEBI:59789"/>
    </ligand>
</feature>
<feature type="mutagenesis site" description="Loss of activity." evidence="1">
    <original>E</original>
    <variation>A</variation>
    <location>
        <position position="35"/>
    </location>
</feature>
<feature type="mutagenesis site" description="Significantly decreases activity." evidence="1">
    <original>D</original>
    <variation>A</variation>
    <location>
        <position position="36"/>
    </location>
</feature>
<feature type="mutagenesis site" description="Significantly decreases activity." evidence="1">
    <original>F</original>
    <variation>A</variation>
    <location>
        <position position="88"/>
    </location>
</feature>
<feature type="mutagenesis site" description="Significantly decreases activity." evidence="1">
    <original>E</original>
    <variation>A</variation>
    <location>
        <position position="91"/>
    </location>
</feature>
<feature type="mutagenesis site" description="Loss of activity." evidence="1">
    <original>R</original>
    <variation>A</variation>
    <location>
        <position position="92"/>
    </location>
</feature>
<feature type="mutagenesis site" description="Loss of activity." evidence="1">
    <original>R</original>
    <variation>A</variation>
    <location>
        <position position="135"/>
    </location>
</feature>
<feature type="mutagenesis site" description="Significantly decreases activity." evidence="1">
    <original>R</original>
    <variation>A</variation>
    <location>
        <position position="165"/>
    </location>
</feature>
<feature type="mutagenesis site" description="Slightly decreases activity." evidence="1">
    <original>S</original>
    <variation>A</variation>
    <location>
        <position position="219"/>
    </location>
</feature>
<feature type="mutagenesis site" description="Significantly decreases activity." evidence="1">
    <original>E</original>
    <variation>Q</variation>
    <location>
        <position position="220"/>
    </location>
</feature>
<feature type="helix" evidence="8">
    <location>
        <begin position="15"/>
        <end position="23"/>
    </location>
</feature>
<feature type="turn" evidence="9">
    <location>
        <begin position="26"/>
        <end position="28"/>
    </location>
</feature>
<feature type="strand" evidence="8">
    <location>
        <begin position="31"/>
        <end position="36"/>
    </location>
</feature>
<feature type="helix" evidence="8">
    <location>
        <begin position="37"/>
        <end position="45"/>
    </location>
</feature>
<feature type="strand" evidence="8">
    <location>
        <begin position="50"/>
        <end position="56"/>
    </location>
</feature>
<feature type="helix" evidence="8">
    <location>
        <begin position="63"/>
        <end position="71"/>
    </location>
</feature>
<feature type="strand" evidence="8">
    <location>
        <begin position="76"/>
        <end position="79"/>
    </location>
</feature>
<feature type="helix" evidence="8">
    <location>
        <begin position="81"/>
        <end position="84"/>
    </location>
</feature>
<feature type="strand" evidence="8">
    <location>
        <begin position="96"/>
        <end position="101"/>
    </location>
</feature>
<feature type="helix" evidence="8">
    <location>
        <begin position="108"/>
        <end position="114"/>
    </location>
</feature>
<feature type="strand" evidence="8">
    <location>
        <begin position="118"/>
        <end position="123"/>
    </location>
</feature>
<feature type="helix" evidence="8">
    <location>
        <begin position="127"/>
        <end position="139"/>
    </location>
</feature>
<feature type="strand" evidence="8">
    <location>
        <begin position="143"/>
        <end position="149"/>
    </location>
</feature>
<feature type="helix" evidence="8">
    <location>
        <begin position="158"/>
        <end position="163"/>
    </location>
</feature>
<feature type="turn" evidence="8">
    <location>
        <begin position="164"/>
        <end position="166"/>
    </location>
</feature>
<feature type="turn" evidence="8">
    <location>
        <begin position="168"/>
        <end position="170"/>
    </location>
</feature>
<feature type="strand" evidence="8">
    <location>
        <begin position="173"/>
        <end position="175"/>
    </location>
</feature>
<feature type="helix" evidence="8">
    <location>
        <begin position="178"/>
        <end position="187"/>
    </location>
</feature>
<feature type="strand" evidence="8">
    <location>
        <begin position="192"/>
        <end position="195"/>
    </location>
</feature>
<feature type="strand" evidence="8">
    <location>
        <begin position="200"/>
        <end position="202"/>
    </location>
</feature>
<feature type="helix" evidence="8">
    <location>
        <begin position="203"/>
        <end position="208"/>
    </location>
</feature>
<feature type="strand" evidence="8">
    <location>
        <begin position="214"/>
        <end position="219"/>
    </location>
</feature>
<feature type="turn" evidence="8">
    <location>
        <begin position="220"/>
        <end position="222"/>
    </location>
</feature>
<feature type="helix" evidence="8">
    <location>
        <begin position="226"/>
        <end position="231"/>
    </location>
</feature>
<feature type="strand" evidence="8">
    <location>
        <begin position="235"/>
        <end position="237"/>
    </location>
</feature>
<feature type="helix" evidence="8">
    <location>
        <begin position="249"/>
        <end position="259"/>
    </location>
</feature>
<feature type="helix" evidence="8">
    <location>
        <begin position="261"/>
        <end position="272"/>
    </location>
</feature>
<name>NSHR_STRAS</name>
<reference key="1">
    <citation type="journal article" date="1990" name="Gene">
        <title>Nucleotide sequence and transcriptional analysis of the nosiheptide-resistance gene from Streptomyces actuosus.</title>
        <authorList>
            <person name="Li Y."/>
            <person name="Dosch D.C."/>
            <person name="Strohl W.R."/>
            <person name="Floss H.G."/>
        </authorList>
    </citation>
    <scope>NUCLEOTIDE SEQUENCE [GENOMIC DNA]</scope>
    <source>
        <strain>ATCC 25421 / DSM 40337 / JCM 4445 / NBRC 13009 / NRRL 2954 / VKM Ac-1274</strain>
    </source>
</reference>
<reference key="2">
    <citation type="journal article" date="2010" name="Acta Crystallogr. F">
        <title>Crystallization and preliminary crystallographic analysis of nosiheptide-resistance methyltransferase from Streptomyces actuosus in complex with SAM.</title>
        <authorList>
            <person name="Yang H."/>
            <person name="Wang P."/>
            <person name="Dong Z."/>
            <person name="Li X."/>
            <person name="Gong R."/>
            <person name="Yang Y."/>
            <person name="Li Z."/>
            <person name="Xu Y."/>
            <person name="Xu Y."/>
        </authorList>
    </citation>
    <scope>CRYSTALLIZATION</scope>
</reference>
<reference evidence="6 7" key="3">
    <citation type="journal article" date="2010" name="Biochemistry">
        <title>Crystal structure of the nosiheptide-resistance methyltransferase of Streptomyces actuosus.</title>
        <authorList>
            <person name="Yang H."/>
            <person name="Wang Z."/>
            <person name="Shen Y."/>
            <person name="Wang P."/>
            <person name="Jia X."/>
            <person name="Zhao L."/>
            <person name="Zhou P."/>
            <person name="Gong R."/>
            <person name="Li Z."/>
            <person name="Yang Y."/>
            <person name="Chen D."/>
            <person name="Murchie A.I."/>
            <person name="Xu Y."/>
        </authorList>
    </citation>
    <scope>X-RAY CRYSTALLOGRAPHY (2.00 ANGSTROMS) IN COMPLEX WITH S-ADENOSYL-L-METHIONINE</scope>
    <scope>FUNCTION</scope>
    <scope>CATALYTIC ACTIVITY</scope>
    <scope>SUBUNIT</scope>
    <scope>MUTAGENESIS OF GLU-35; ASP-36; PHE-88; GLU-91; ARG-92; ARG-135; ARG-165; SER-219 AND GLU-220</scope>
</reference>
<protein>
    <recommendedName>
        <fullName evidence="4">23S rRNA (adenosine(1067)-2'-O)-methyltransferase</fullName>
        <ecNumber evidence="1">2.1.1.230</ecNumber>
    </recommendedName>
    <alternativeName>
        <fullName evidence="2 3">Nosiheptide-resistance methyltransferase</fullName>
        <shortName evidence="3">NHR</shortName>
        <shortName evidence="2">NSR</shortName>
    </alternativeName>
</protein>
<organism>
    <name type="scientific">Streptomyces actuosus</name>
    <dbReference type="NCBI Taxonomy" id="1885"/>
    <lineage>
        <taxon>Bacteria</taxon>
        <taxon>Bacillati</taxon>
        <taxon>Actinomycetota</taxon>
        <taxon>Actinomycetes</taxon>
        <taxon>Kitasatosporales</taxon>
        <taxon>Streptomycetaceae</taxon>
        <taxon>Streptomyces</taxon>
    </lineage>
</organism>
<sequence>MTEPAIITNASDPAVQRIIDVTKHSRASIKTTLIEDTEPLMECIRAGVQFIEVYGSSGTPLDPALLDLCRQREIPVRLIDVSIVNQLFKAERKAKVFGIARVPRPARLADIAERGGDVVVLDGVKIVGNIGAIVRTSLALGAAGIVLVDSDLATIADRRLLRASRGYVFSLPVVLADREEAVSFLRDNDIALMVLDTDGDLGVKDLGDRADRMALVFGSEKGGPSGLFQEASAGTVSIPMLSSTESLNVSVSVGIALHERSARNFAVRRAAAQA</sequence>
<gene>
    <name evidence="5" type="primary">nshR</name>
</gene>
<evidence type="ECO:0000269" key="1">
    <source>
    </source>
</evidence>
<evidence type="ECO:0000303" key="2">
    <source>
    </source>
</evidence>
<evidence type="ECO:0000303" key="3">
    <source>
    </source>
</evidence>
<evidence type="ECO:0000305" key="4"/>
<evidence type="ECO:0000312" key="5">
    <source>
        <dbReference type="EMBL" id="AAB17875.1"/>
    </source>
</evidence>
<evidence type="ECO:0007744" key="6">
    <source>
        <dbReference type="PDB" id="3NK6"/>
    </source>
</evidence>
<evidence type="ECO:0007744" key="7">
    <source>
        <dbReference type="PDB" id="3NK7"/>
    </source>
</evidence>
<evidence type="ECO:0007829" key="8">
    <source>
        <dbReference type="PDB" id="3NK6"/>
    </source>
</evidence>
<evidence type="ECO:0007829" key="9">
    <source>
        <dbReference type="PDB" id="3NK7"/>
    </source>
</evidence>
<keyword id="KW-0002">3D-structure</keyword>
<keyword id="KW-0046">Antibiotic resistance</keyword>
<keyword id="KW-0489">Methyltransferase</keyword>
<keyword id="KW-0949">S-adenosyl-L-methionine</keyword>
<keyword id="KW-0808">Transferase</keyword>
<proteinExistence type="evidence at protein level"/>